<protein>
    <recommendedName>
        <fullName evidence="5">Gibberellin 3-beta-dioxygenase 1</fullName>
        <ecNumber evidence="3">1.14.11.15</ecNumber>
    </recommendedName>
    <alternativeName>
        <fullName evidence="5">GA 3-oxidase 1</fullName>
        <shortName evidence="4">OsGA3ox1</shortName>
    </alternativeName>
    <alternativeName>
        <fullName evidence="4">Gibberellin 3 beta-hydroxylase 1</fullName>
    </alternativeName>
</protein>
<accession>Q6AT12</accession>
<accession>A0A0P0WII8</accession>
<gene>
    <name evidence="4" type="primary">GA3OX1</name>
    <name evidence="7" type="ordered locus">Os05g0178100</name>
    <name evidence="5" type="ordered locus">LOC_Os05g08540</name>
    <name evidence="6" type="ORF">OSJNBa0029B02.17</name>
</gene>
<evidence type="ECO:0000250" key="1">
    <source>
        <dbReference type="UniProtKB" id="D4N500"/>
    </source>
</evidence>
<evidence type="ECO:0000255" key="2">
    <source>
        <dbReference type="PROSITE-ProRule" id="PRU00805"/>
    </source>
</evidence>
<evidence type="ECO:0000269" key="3">
    <source>
    </source>
</evidence>
<evidence type="ECO:0000303" key="4">
    <source>
    </source>
</evidence>
<evidence type="ECO:0000305" key="5"/>
<evidence type="ECO:0000312" key="6">
    <source>
        <dbReference type="EMBL" id="AAT77356.1"/>
    </source>
</evidence>
<evidence type="ECO:0000312" key="7">
    <source>
        <dbReference type="EMBL" id="BAF16712.1"/>
    </source>
</evidence>
<organism>
    <name type="scientific">Oryza sativa subsp. japonica</name>
    <name type="common">Rice</name>
    <dbReference type="NCBI Taxonomy" id="39947"/>
    <lineage>
        <taxon>Eukaryota</taxon>
        <taxon>Viridiplantae</taxon>
        <taxon>Streptophyta</taxon>
        <taxon>Embryophyta</taxon>
        <taxon>Tracheophyta</taxon>
        <taxon>Spermatophyta</taxon>
        <taxon>Magnoliopsida</taxon>
        <taxon>Liliopsida</taxon>
        <taxon>Poales</taxon>
        <taxon>Poaceae</taxon>
        <taxon>BOP clade</taxon>
        <taxon>Oryzoideae</taxon>
        <taxon>Oryzeae</taxon>
        <taxon>Oryzinae</taxon>
        <taxon>Oryza</taxon>
        <taxon>Oryza sativa</taxon>
    </lineage>
</organism>
<dbReference type="EC" id="1.14.11.15" evidence="3"/>
<dbReference type="EMBL" id="AC144738">
    <property type="protein sequence ID" value="AAT77356.1"/>
    <property type="molecule type" value="Genomic_DNA"/>
</dbReference>
<dbReference type="EMBL" id="AP008211">
    <property type="protein sequence ID" value="BAF16712.1"/>
    <property type="molecule type" value="Genomic_DNA"/>
</dbReference>
<dbReference type="EMBL" id="AP014961">
    <property type="protein sequence ID" value="BAS92534.1"/>
    <property type="status" value="ALT_INIT"/>
    <property type="molecule type" value="Genomic_DNA"/>
</dbReference>
<dbReference type="EMBL" id="AK120915">
    <property type="protein sequence ID" value="BAH00227.1"/>
    <property type="molecule type" value="mRNA"/>
</dbReference>
<dbReference type="SMR" id="Q6AT12"/>
<dbReference type="FunCoup" id="Q6AT12">
    <property type="interactions" value="32"/>
</dbReference>
<dbReference type="STRING" id="39947.Q6AT12"/>
<dbReference type="PaxDb" id="39947-Q6AT12"/>
<dbReference type="KEGG" id="dosa:Os05g0178100"/>
<dbReference type="KEGG" id="osa:4337968"/>
<dbReference type="eggNOG" id="KOG0143">
    <property type="taxonomic scope" value="Eukaryota"/>
</dbReference>
<dbReference type="HOGENOM" id="CLU_010119_16_3_1"/>
<dbReference type="InParanoid" id="Q6AT12"/>
<dbReference type="OrthoDB" id="288590at2759"/>
<dbReference type="UniPathway" id="UPA00390"/>
<dbReference type="Proteomes" id="UP000000763">
    <property type="component" value="Chromosome 5"/>
</dbReference>
<dbReference type="Proteomes" id="UP000059680">
    <property type="component" value="Chromosome 5"/>
</dbReference>
<dbReference type="GO" id="GO:0016707">
    <property type="term" value="F:gibberellin 3-beta-dioxygenase activity"/>
    <property type="evidence" value="ECO:0000314"/>
    <property type="project" value="UniProtKB"/>
</dbReference>
<dbReference type="GO" id="GO:0046872">
    <property type="term" value="F:metal ion binding"/>
    <property type="evidence" value="ECO:0007669"/>
    <property type="project" value="UniProtKB-KW"/>
</dbReference>
<dbReference type="GO" id="GO:0009686">
    <property type="term" value="P:gibberellin biosynthetic process"/>
    <property type="evidence" value="ECO:0000314"/>
    <property type="project" value="UniProtKB"/>
</dbReference>
<dbReference type="GO" id="GO:0009685">
    <property type="term" value="P:gibberellin metabolic process"/>
    <property type="evidence" value="ECO:0000305"/>
    <property type="project" value="Gramene"/>
</dbReference>
<dbReference type="GO" id="GO:0009416">
    <property type="term" value="P:response to light stimulus"/>
    <property type="evidence" value="ECO:0000318"/>
    <property type="project" value="GO_Central"/>
</dbReference>
<dbReference type="FunFam" id="2.60.120.330:FF:000013">
    <property type="entry name" value="Gibberellin 3-beta-dioxygenase 1"/>
    <property type="match status" value="1"/>
</dbReference>
<dbReference type="Gene3D" id="2.60.120.330">
    <property type="entry name" value="B-lactam Antibiotic, Isopenicillin N Synthase, Chain"/>
    <property type="match status" value="1"/>
</dbReference>
<dbReference type="InterPro" id="IPR026992">
    <property type="entry name" value="DIOX_N"/>
</dbReference>
<dbReference type="InterPro" id="IPR044861">
    <property type="entry name" value="IPNS-like_FE2OG_OXY"/>
</dbReference>
<dbReference type="InterPro" id="IPR027443">
    <property type="entry name" value="IPNS-like_sf"/>
</dbReference>
<dbReference type="InterPro" id="IPR050231">
    <property type="entry name" value="Iron_ascorbate_oxido_reductase"/>
</dbReference>
<dbReference type="InterPro" id="IPR005123">
    <property type="entry name" value="Oxoglu/Fe-dep_dioxygenase_dom"/>
</dbReference>
<dbReference type="PANTHER" id="PTHR47990">
    <property type="entry name" value="2-OXOGLUTARATE (2OG) AND FE(II)-DEPENDENT OXYGENASE SUPERFAMILY PROTEIN-RELATED"/>
    <property type="match status" value="1"/>
</dbReference>
<dbReference type="Pfam" id="PF03171">
    <property type="entry name" value="2OG-FeII_Oxy"/>
    <property type="match status" value="1"/>
</dbReference>
<dbReference type="Pfam" id="PF14226">
    <property type="entry name" value="DIOX_N"/>
    <property type="match status" value="1"/>
</dbReference>
<dbReference type="SUPFAM" id="SSF51197">
    <property type="entry name" value="Clavaminate synthase-like"/>
    <property type="match status" value="1"/>
</dbReference>
<dbReference type="PROSITE" id="PS51471">
    <property type="entry name" value="FE2OG_OXY"/>
    <property type="match status" value="1"/>
</dbReference>
<reference key="1">
    <citation type="journal article" date="2005" name="Mol. Genet. Genomics">
        <title>A fine physical map of the rice chromosome 5.</title>
        <authorList>
            <person name="Cheng C.-H."/>
            <person name="Chung M.C."/>
            <person name="Liu S.-M."/>
            <person name="Chen S.-K."/>
            <person name="Kao F.Y."/>
            <person name="Lin S.-J."/>
            <person name="Hsiao S.-H."/>
            <person name="Tseng I.C."/>
            <person name="Hsing Y.-I.C."/>
            <person name="Wu H.-P."/>
            <person name="Chen C.-S."/>
            <person name="Shaw J.-F."/>
            <person name="Wu J."/>
            <person name="Matsumoto T."/>
            <person name="Sasaki T."/>
            <person name="Chen H.-C."/>
            <person name="Chow T.-Y."/>
        </authorList>
    </citation>
    <scope>NUCLEOTIDE SEQUENCE [LARGE SCALE GENOMIC DNA]</scope>
    <source>
        <strain>cv. Nipponbare</strain>
    </source>
</reference>
<reference key="2">
    <citation type="journal article" date="2005" name="Nature">
        <title>The map-based sequence of the rice genome.</title>
        <authorList>
            <consortium name="International rice genome sequencing project (IRGSP)"/>
        </authorList>
    </citation>
    <scope>NUCLEOTIDE SEQUENCE [LARGE SCALE GENOMIC DNA]</scope>
    <source>
        <strain>cv. Nipponbare</strain>
    </source>
</reference>
<reference key="3">
    <citation type="journal article" date="2008" name="Nucleic Acids Res.">
        <title>The rice annotation project database (RAP-DB): 2008 update.</title>
        <authorList>
            <consortium name="The rice annotation project (RAP)"/>
        </authorList>
    </citation>
    <scope>GENOME REANNOTATION</scope>
    <source>
        <strain>cv. Nipponbare</strain>
    </source>
</reference>
<reference key="4">
    <citation type="journal article" date="2013" name="Rice">
        <title>Improvement of the Oryza sativa Nipponbare reference genome using next generation sequence and optical map data.</title>
        <authorList>
            <person name="Kawahara Y."/>
            <person name="de la Bastide M."/>
            <person name="Hamilton J.P."/>
            <person name="Kanamori H."/>
            <person name="McCombie W.R."/>
            <person name="Ouyang S."/>
            <person name="Schwartz D.C."/>
            <person name="Tanaka T."/>
            <person name="Wu J."/>
            <person name="Zhou S."/>
            <person name="Childs K.L."/>
            <person name="Davidson R.M."/>
            <person name="Lin H."/>
            <person name="Quesada-Ocampo L."/>
            <person name="Vaillancourt B."/>
            <person name="Sakai H."/>
            <person name="Lee S.S."/>
            <person name="Kim J."/>
            <person name="Numa H."/>
            <person name="Itoh T."/>
            <person name="Buell C.R."/>
            <person name="Matsumoto T."/>
        </authorList>
    </citation>
    <scope>GENOME REANNOTATION</scope>
    <source>
        <strain>cv. Nipponbare</strain>
    </source>
</reference>
<reference key="5">
    <citation type="journal article" date="2003" name="Science">
        <title>Collection, mapping, and annotation of over 28,000 cDNA clones from japonica rice.</title>
        <authorList>
            <consortium name="The rice full-length cDNA consortium"/>
        </authorList>
    </citation>
    <scope>NUCLEOTIDE SEQUENCE [LARGE SCALE MRNA]</scope>
    <source>
        <strain>cv. Nipponbare</strain>
    </source>
</reference>
<reference key="6">
    <citation type="journal article" date="2001" name="Proc. Natl. Acad. Sci. U.S.A.">
        <title>Cloning and functional analysis of two gibberellin 3 beta - hydroxylase genes that are differently expressed during the growth of rice.</title>
        <authorList>
            <person name="Itoh H."/>
            <person name="Ueguchi-Tanaka M."/>
            <person name="Sentoku N."/>
            <person name="Kitano H."/>
            <person name="Matsuoka M."/>
            <person name="Kobayashi M."/>
        </authorList>
    </citation>
    <scope>FUNCTION</scope>
    <scope>CATALYTIC ACTIVITY</scope>
    <scope>COFACTOR</scope>
    <scope>TISSUE SPECIFICITY</scope>
    <scope>DEVELOPMENTAL STAGE</scope>
</reference>
<sequence>MQIMTSSSTSPTSPTSPLAAAADNGVAAAYFNFRGAERVPESHVWKGMHEKDTAPVAAADADGGDAVPVVDMSGGDDAAVAAVARAAEEWGGFLLVGHGVTAEALARVEAQAARLFALPADDKARGARRPGGGNTGYGVPPYLLRYPKQMWAEGYTFPPPAIRDEFRRVWPDAGDDYHRFCSAMEEYDSSMRALGERLLAMFFKALGLAGNDAPGGETERKIRETLTSTIHLNMFPRCPDPDRVVGLAAHTDSGFFTFILQSPVPGLQLLRHRPDRWVTVPGTPGALIVVVGDLFHVLTNGRFHSVFHRAVVNRERDRISMPYFLGPPADMKVTPLVAAGSPESKAVYQAVTWPEYMAVRDKLFGTNISALSMIRVAKEEDKES</sequence>
<name>G3OX1_ORYSJ</name>
<proteinExistence type="evidence at protein level"/>
<feature type="chain" id="PRO_0000445030" description="Gibberellin 3-beta-dioxygenase 1">
    <location>
        <begin position="1"/>
        <end position="384"/>
    </location>
</feature>
<feature type="domain" description="Fe2OG dioxygenase" evidence="2">
    <location>
        <begin position="225"/>
        <end position="327"/>
    </location>
</feature>
<feature type="binding site" evidence="2">
    <location>
        <position position="250"/>
    </location>
    <ligand>
        <name>Fe cation</name>
        <dbReference type="ChEBI" id="CHEBI:24875"/>
    </ligand>
</feature>
<feature type="binding site" evidence="2">
    <location>
        <position position="252"/>
    </location>
    <ligand>
        <name>Fe cation</name>
        <dbReference type="ChEBI" id="CHEBI:24875"/>
    </ligand>
</feature>
<feature type="binding site" evidence="2">
    <location>
        <position position="308"/>
    </location>
    <ligand>
        <name>Fe cation</name>
        <dbReference type="ChEBI" id="CHEBI:24875"/>
    </ligand>
</feature>
<feature type="binding site" evidence="2">
    <location>
        <position position="318"/>
    </location>
    <ligand>
        <name>2-oxoglutarate</name>
        <dbReference type="ChEBI" id="CHEBI:16810"/>
    </ligand>
</feature>
<feature type="binding site" evidence="1">
    <location>
        <position position="320"/>
    </location>
    <ligand>
        <name>2-oxoglutarate</name>
        <dbReference type="ChEBI" id="CHEBI:16810"/>
    </ligand>
</feature>
<keyword id="KW-0223">Dioxygenase</keyword>
<keyword id="KW-0408">Iron</keyword>
<keyword id="KW-0479">Metal-binding</keyword>
<keyword id="KW-0560">Oxidoreductase</keyword>
<keyword id="KW-1185">Reference proteome</keyword>
<comment type="function">
    <text evidence="3">Catalyzes the 3-beta-hydroxylation of the inactive gibberellin precursors, leading to the formation of bioactive gibberellins. In vitro, converts the precursors GA20, GA5, GA44 and GA9 to the corresponding 3-beta-hydroxylated bioactive products GA1, GA3, GA38 and GA4, respectively. Involved in the production of bioactive GA for vegetative growth and development. May possess 2,3-desaturase activity, catalyzing the conversion of GA9 to 2,3-dehydro-GA9, and GA20 to GA5 (2,3-dehydro GA20). May possess 2-beta-hydroxylase activity, catalyzing the conversion of GA1 and GA4 to the corresponding 2-beta-hydroxylated products GA8 and GA34, respectively.</text>
</comment>
<comment type="catalytic activity">
    <reaction evidence="3">
        <text>gibberellin A20 + 2-oxoglutarate + O2 = gibberellin A1 + succinate + CO2</text>
        <dbReference type="Rhea" id="RHEA:10104"/>
        <dbReference type="ChEBI" id="CHEBI:15379"/>
        <dbReference type="ChEBI" id="CHEBI:16526"/>
        <dbReference type="ChEBI" id="CHEBI:16810"/>
        <dbReference type="ChEBI" id="CHEBI:30031"/>
        <dbReference type="ChEBI" id="CHEBI:58524"/>
        <dbReference type="ChEBI" id="CHEBI:58526"/>
        <dbReference type="EC" id="1.14.11.15"/>
    </reaction>
</comment>
<comment type="cofactor">
    <cofactor evidence="3">
        <name>L-ascorbate</name>
        <dbReference type="ChEBI" id="CHEBI:38290"/>
    </cofactor>
</comment>
<comment type="cofactor">
    <cofactor evidence="2">
        <name>Fe(2+)</name>
        <dbReference type="ChEBI" id="CHEBI:29033"/>
    </cofactor>
    <text evidence="2">Binds 1 Fe(2+) ion per subunit.</text>
</comment>
<comment type="pathway">
    <text evidence="5">Plant hormone biosynthesis; gibberellin biosynthesis.</text>
</comment>
<comment type="tissue specificity">
    <text evidence="3">Expressed in unopened flowers.</text>
</comment>
<comment type="developmental stage">
    <text evidence="3">During anther development, expressed in the tapetum at the middle-stage and late-stage of pollen differentiation.</text>
</comment>
<comment type="similarity">
    <text evidence="5">Belongs to the iron/ascorbate-dependent oxidoreductase family.</text>
</comment>
<comment type="sequence caution" evidence="5">
    <conflict type="erroneous initiation">
        <sequence resource="EMBL-CDS" id="BAS92534"/>
    </conflict>
    <text>Truncated N-terminus.</text>
</comment>